<dbReference type="EMBL" id="CP000454">
    <property type="protein sequence ID" value="ABK04344.1"/>
    <property type="molecule type" value="Genomic_DNA"/>
</dbReference>
<dbReference type="RefSeq" id="WP_003803789.1">
    <property type="nucleotide sequence ID" value="NC_008541.1"/>
</dbReference>
<dbReference type="SMR" id="A0JZ74"/>
<dbReference type="STRING" id="290399.Arth_2965"/>
<dbReference type="GeneID" id="97301782"/>
<dbReference type="KEGG" id="art:Arth_2965"/>
<dbReference type="eggNOG" id="COG0093">
    <property type="taxonomic scope" value="Bacteria"/>
</dbReference>
<dbReference type="HOGENOM" id="CLU_095071_2_1_11"/>
<dbReference type="OrthoDB" id="9806379at2"/>
<dbReference type="Proteomes" id="UP000000754">
    <property type="component" value="Chromosome"/>
</dbReference>
<dbReference type="GO" id="GO:0022625">
    <property type="term" value="C:cytosolic large ribosomal subunit"/>
    <property type="evidence" value="ECO:0007669"/>
    <property type="project" value="TreeGrafter"/>
</dbReference>
<dbReference type="GO" id="GO:0070180">
    <property type="term" value="F:large ribosomal subunit rRNA binding"/>
    <property type="evidence" value="ECO:0007669"/>
    <property type="project" value="TreeGrafter"/>
</dbReference>
<dbReference type="GO" id="GO:0003735">
    <property type="term" value="F:structural constituent of ribosome"/>
    <property type="evidence" value="ECO:0007669"/>
    <property type="project" value="InterPro"/>
</dbReference>
<dbReference type="GO" id="GO:0006412">
    <property type="term" value="P:translation"/>
    <property type="evidence" value="ECO:0007669"/>
    <property type="project" value="UniProtKB-UniRule"/>
</dbReference>
<dbReference type="CDD" id="cd00337">
    <property type="entry name" value="Ribosomal_uL14"/>
    <property type="match status" value="1"/>
</dbReference>
<dbReference type="FunFam" id="2.40.150.20:FF:000001">
    <property type="entry name" value="50S ribosomal protein L14"/>
    <property type="match status" value="1"/>
</dbReference>
<dbReference type="Gene3D" id="2.40.150.20">
    <property type="entry name" value="Ribosomal protein L14"/>
    <property type="match status" value="1"/>
</dbReference>
<dbReference type="HAMAP" id="MF_01367">
    <property type="entry name" value="Ribosomal_uL14"/>
    <property type="match status" value="1"/>
</dbReference>
<dbReference type="InterPro" id="IPR000218">
    <property type="entry name" value="Ribosomal_uL14"/>
</dbReference>
<dbReference type="InterPro" id="IPR005745">
    <property type="entry name" value="Ribosomal_uL14_bac-type"/>
</dbReference>
<dbReference type="InterPro" id="IPR019972">
    <property type="entry name" value="Ribosomal_uL14_CS"/>
</dbReference>
<dbReference type="InterPro" id="IPR036853">
    <property type="entry name" value="Ribosomal_uL14_sf"/>
</dbReference>
<dbReference type="NCBIfam" id="TIGR01067">
    <property type="entry name" value="rplN_bact"/>
    <property type="match status" value="1"/>
</dbReference>
<dbReference type="PANTHER" id="PTHR11761">
    <property type="entry name" value="50S/60S RIBOSOMAL PROTEIN L14/L23"/>
    <property type="match status" value="1"/>
</dbReference>
<dbReference type="PANTHER" id="PTHR11761:SF3">
    <property type="entry name" value="LARGE RIBOSOMAL SUBUNIT PROTEIN UL14M"/>
    <property type="match status" value="1"/>
</dbReference>
<dbReference type="Pfam" id="PF00238">
    <property type="entry name" value="Ribosomal_L14"/>
    <property type="match status" value="1"/>
</dbReference>
<dbReference type="SMART" id="SM01374">
    <property type="entry name" value="Ribosomal_L14"/>
    <property type="match status" value="1"/>
</dbReference>
<dbReference type="SUPFAM" id="SSF50193">
    <property type="entry name" value="Ribosomal protein L14"/>
    <property type="match status" value="1"/>
</dbReference>
<dbReference type="PROSITE" id="PS00049">
    <property type="entry name" value="RIBOSOMAL_L14"/>
    <property type="match status" value="1"/>
</dbReference>
<proteinExistence type="inferred from homology"/>
<name>RL14_ARTS2</name>
<evidence type="ECO:0000255" key="1">
    <source>
        <dbReference type="HAMAP-Rule" id="MF_01367"/>
    </source>
</evidence>
<evidence type="ECO:0000305" key="2"/>
<gene>
    <name evidence="1" type="primary">rplN</name>
    <name type="ordered locus">Arth_2965</name>
</gene>
<protein>
    <recommendedName>
        <fullName evidence="1">Large ribosomal subunit protein uL14</fullName>
    </recommendedName>
    <alternativeName>
        <fullName evidence="2">50S ribosomal protein L14</fullName>
    </alternativeName>
</protein>
<organism>
    <name type="scientific">Arthrobacter sp. (strain FB24)</name>
    <dbReference type="NCBI Taxonomy" id="290399"/>
    <lineage>
        <taxon>Bacteria</taxon>
        <taxon>Bacillati</taxon>
        <taxon>Actinomycetota</taxon>
        <taxon>Actinomycetes</taxon>
        <taxon>Micrococcales</taxon>
        <taxon>Micrococcaceae</taxon>
        <taxon>Arthrobacter</taxon>
    </lineage>
</organism>
<sequence length="122" mass="13289">MIQQESRLKVADNTGAKEILTIRVLGGSGRRYAGIGDVIVATVKDAIPGGNVKKGDVVKAVIVRTKKERRRADGSYIKFDENAAVILKNDGDPRGTRIFGPVGRELRDKKFMKIVSLAPEVL</sequence>
<accession>A0JZ74</accession>
<feature type="chain" id="PRO_1000055506" description="Large ribosomal subunit protein uL14">
    <location>
        <begin position="1"/>
        <end position="122"/>
    </location>
</feature>
<keyword id="KW-1185">Reference proteome</keyword>
<keyword id="KW-0687">Ribonucleoprotein</keyword>
<keyword id="KW-0689">Ribosomal protein</keyword>
<keyword id="KW-0694">RNA-binding</keyword>
<keyword id="KW-0699">rRNA-binding</keyword>
<comment type="function">
    <text evidence="1">Binds to 23S rRNA. Forms part of two intersubunit bridges in the 70S ribosome.</text>
</comment>
<comment type="subunit">
    <text evidence="1">Part of the 50S ribosomal subunit. Forms a cluster with proteins L3 and L19. In the 70S ribosome, L14 and L19 interact and together make contacts with the 16S rRNA in bridges B5 and B8.</text>
</comment>
<comment type="similarity">
    <text evidence="1">Belongs to the universal ribosomal protein uL14 family.</text>
</comment>
<reference key="1">
    <citation type="journal article" date="2013" name="Stand. Genomic Sci.">
        <title>Complete genome sequence of Arthrobacter sp. strain FB24.</title>
        <authorList>
            <person name="Nakatsu C.H."/>
            <person name="Barabote R."/>
            <person name="Thompson S."/>
            <person name="Bruce D."/>
            <person name="Detter C."/>
            <person name="Brettin T."/>
            <person name="Han C."/>
            <person name="Beasley F."/>
            <person name="Chen W."/>
            <person name="Konopka A."/>
            <person name="Xie G."/>
        </authorList>
    </citation>
    <scope>NUCLEOTIDE SEQUENCE [LARGE SCALE GENOMIC DNA]</scope>
    <source>
        <strain>FB24</strain>
    </source>
</reference>